<sequence length="286" mass="31049">MRATWRGSVTVGLVSFPVRLTPVRQERGVRLHQVHRVDGGRVRHRRVCELCGEELEAADLARGHDSGAGVVLVEDEELAGLRALPSRAVEVVQFSPAGQVDPVLLGRAYYLEPEEPGTGSYSVLREVLERGGLVGIARVPLRGREVVAVVRPRGGVLVLQVLVWAEEVREPDFVVPVAVSGERELGLAASLVGAMTEDFDPAAFPDAYSAGLTRVVADKLAGQRLERQERQRREAGEVRQADETDEAAETEVPEVDIPASRAPGETGGELLAALRRSLERLRGGRR</sequence>
<evidence type="ECO:0000255" key="1">
    <source>
        <dbReference type="HAMAP-Rule" id="MF_01875"/>
    </source>
</evidence>
<evidence type="ECO:0000256" key="2">
    <source>
        <dbReference type="SAM" id="MobiDB-lite"/>
    </source>
</evidence>
<organism>
    <name type="scientific">Actinosynnema mirum (strain ATCC 29888 / DSM 43827 / JCM 3225 / NBRC 14064 / NCIMB 13271 / NRRL B-12336 / IMRU 3971 / 101)</name>
    <dbReference type="NCBI Taxonomy" id="446462"/>
    <lineage>
        <taxon>Bacteria</taxon>
        <taxon>Bacillati</taxon>
        <taxon>Actinomycetota</taxon>
        <taxon>Actinomycetes</taxon>
        <taxon>Pseudonocardiales</taxon>
        <taxon>Pseudonocardiaceae</taxon>
        <taxon>Actinosynnema</taxon>
    </lineage>
</organism>
<proteinExistence type="inferred from homology"/>
<name>KU_ACTMD</name>
<feature type="chain" id="PRO_0000389172" description="Non-homologous end joining protein Ku">
    <location>
        <begin position="1"/>
        <end position="286"/>
    </location>
</feature>
<feature type="domain" description="Ku" evidence="1">
    <location>
        <begin position="10"/>
        <end position="175"/>
    </location>
</feature>
<feature type="region of interest" description="Disordered" evidence="2">
    <location>
        <begin position="226"/>
        <end position="270"/>
    </location>
</feature>
<feature type="compositionally biased region" description="Basic and acidic residues" evidence="2">
    <location>
        <begin position="226"/>
        <end position="242"/>
    </location>
</feature>
<feature type="compositionally biased region" description="Acidic residues" evidence="2">
    <location>
        <begin position="243"/>
        <end position="254"/>
    </location>
</feature>
<dbReference type="EMBL" id="CP001630">
    <property type="protein sequence ID" value="ACU37315.1"/>
    <property type="molecule type" value="Genomic_DNA"/>
</dbReference>
<dbReference type="RefSeq" id="WP_015802203.1">
    <property type="nucleotide sequence ID" value="NC_013093.1"/>
</dbReference>
<dbReference type="STRING" id="446462.Amir_3417"/>
<dbReference type="KEGG" id="ami:Amir_3417"/>
<dbReference type="eggNOG" id="COG1273">
    <property type="taxonomic scope" value="Bacteria"/>
</dbReference>
<dbReference type="HOGENOM" id="CLU_048975_1_1_11"/>
<dbReference type="OrthoDB" id="9795084at2"/>
<dbReference type="Proteomes" id="UP000002213">
    <property type="component" value="Chromosome"/>
</dbReference>
<dbReference type="GO" id="GO:0003690">
    <property type="term" value="F:double-stranded DNA binding"/>
    <property type="evidence" value="ECO:0007669"/>
    <property type="project" value="UniProtKB-UniRule"/>
</dbReference>
<dbReference type="GO" id="GO:0006310">
    <property type="term" value="P:DNA recombination"/>
    <property type="evidence" value="ECO:0007669"/>
    <property type="project" value="UniProtKB-KW"/>
</dbReference>
<dbReference type="GO" id="GO:0006303">
    <property type="term" value="P:double-strand break repair via nonhomologous end joining"/>
    <property type="evidence" value="ECO:0007669"/>
    <property type="project" value="UniProtKB-UniRule"/>
</dbReference>
<dbReference type="Gene3D" id="2.40.290.10">
    <property type="match status" value="1"/>
</dbReference>
<dbReference type="HAMAP" id="MF_01875">
    <property type="entry name" value="Prokaryotic_Ku"/>
    <property type="match status" value="1"/>
</dbReference>
<dbReference type="InterPro" id="IPR006164">
    <property type="entry name" value="Ku70/Ku80_beta-barrel_dom"/>
</dbReference>
<dbReference type="InterPro" id="IPR009187">
    <property type="entry name" value="Prok_Ku"/>
</dbReference>
<dbReference type="InterPro" id="IPR016194">
    <property type="entry name" value="SPOC-like_C_dom_sf"/>
</dbReference>
<dbReference type="PANTHER" id="PTHR41251">
    <property type="entry name" value="NON-HOMOLOGOUS END JOINING PROTEIN KU"/>
    <property type="match status" value="1"/>
</dbReference>
<dbReference type="PANTHER" id="PTHR41251:SF1">
    <property type="entry name" value="NON-HOMOLOGOUS END JOINING PROTEIN KU"/>
    <property type="match status" value="1"/>
</dbReference>
<dbReference type="Pfam" id="PF02735">
    <property type="entry name" value="Ku"/>
    <property type="match status" value="1"/>
</dbReference>
<dbReference type="PIRSF" id="PIRSF006493">
    <property type="entry name" value="Prok_Ku"/>
    <property type="match status" value="1"/>
</dbReference>
<dbReference type="SMART" id="SM00559">
    <property type="entry name" value="Ku78"/>
    <property type="match status" value="1"/>
</dbReference>
<dbReference type="SUPFAM" id="SSF100939">
    <property type="entry name" value="SPOC domain-like"/>
    <property type="match status" value="1"/>
</dbReference>
<comment type="function">
    <text evidence="1">With LigD forms a non-homologous end joining (NHEJ) DNA repair enzyme, which repairs dsDNA breaks with reduced fidelity. Binds linear dsDNA with 5'- and 3'- overhangs but not closed circular dsDNA nor ssDNA. Recruits and stimulates the ligase activity of LigD.</text>
</comment>
<comment type="subunit">
    <text evidence="1">Homodimer. Interacts with LigD.</text>
</comment>
<comment type="similarity">
    <text evidence="1">Belongs to the prokaryotic Ku family.</text>
</comment>
<keyword id="KW-0227">DNA damage</keyword>
<keyword id="KW-0233">DNA recombination</keyword>
<keyword id="KW-0234">DNA repair</keyword>
<keyword id="KW-0238">DNA-binding</keyword>
<keyword id="KW-1185">Reference proteome</keyword>
<reference key="1">
    <citation type="journal article" date="2009" name="Stand. Genomic Sci.">
        <title>Complete genome sequence of Actinosynnema mirum type strain (101).</title>
        <authorList>
            <person name="Land M."/>
            <person name="Lapidus A."/>
            <person name="Mayilraj S."/>
            <person name="Chen F."/>
            <person name="Copeland A."/>
            <person name="Del Rio T.G."/>
            <person name="Nolan M."/>
            <person name="Lucas S."/>
            <person name="Tice H."/>
            <person name="Cheng J.F."/>
            <person name="Chertkov O."/>
            <person name="Bruce D."/>
            <person name="Goodwin L."/>
            <person name="Pitluck S."/>
            <person name="Rohde M."/>
            <person name="Goker M."/>
            <person name="Pati A."/>
            <person name="Ivanova N."/>
            <person name="Mavromatis K."/>
            <person name="Chen A."/>
            <person name="Palaniappan K."/>
            <person name="Hauser L."/>
            <person name="Chang Y.J."/>
            <person name="Jeffries C.C."/>
            <person name="Brettin T."/>
            <person name="Detter J.C."/>
            <person name="Han C."/>
            <person name="Chain P."/>
            <person name="Tindall B.J."/>
            <person name="Bristow J."/>
            <person name="Eisen J.A."/>
            <person name="Markowitz V."/>
            <person name="Hugenholtz P."/>
            <person name="Kyrpides N.C."/>
            <person name="Klenk H.P."/>
        </authorList>
    </citation>
    <scope>NUCLEOTIDE SEQUENCE [LARGE SCALE GENOMIC DNA]</scope>
    <source>
        <strain>ATCC 29888 / DSM 43827 / JCM 3225 / NBRC 14064 / NCIMB 13271 / NRRL B-12336 / IMRU 3971 / 101</strain>
    </source>
</reference>
<accession>C6W9U8</accession>
<gene>
    <name evidence="1" type="primary">ku</name>
    <name type="ordered locus">Amir_3417</name>
</gene>
<protein>
    <recommendedName>
        <fullName evidence="1">Non-homologous end joining protein Ku</fullName>
    </recommendedName>
</protein>